<protein>
    <recommendedName>
        <fullName>Chaperone protein ClpB</fullName>
    </recommendedName>
</protein>
<name>CLPB_BORPA</name>
<reference key="1">
    <citation type="journal article" date="2003" name="Nat. Genet.">
        <title>Comparative analysis of the genome sequences of Bordetella pertussis, Bordetella parapertussis and Bordetella bronchiseptica.</title>
        <authorList>
            <person name="Parkhill J."/>
            <person name="Sebaihia M."/>
            <person name="Preston A."/>
            <person name="Murphy L.D."/>
            <person name="Thomson N.R."/>
            <person name="Harris D.E."/>
            <person name="Holden M.T.G."/>
            <person name="Churcher C.M."/>
            <person name="Bentley S.D."/>
            <person name="Mungall K.L."/>
            <person name="Cerdeno-Tarraga A.-M."/>
            <person name="Temple L."/>
            <person name="James K.D."/>
            <person name="Harris B."/>
            <person name="Quail M.A."/>
            <person name="Achtman M."/>
            <person name="Atkin R."/>
            <person name="Baker S."/>
            <person name="Basham D."/>
            <person name="Bason N."/>
            <person name="Cherevach I."/>
            <person name="Chillingworth T."/>
            <person name="Collins M."/>
            <person name="Cronin A."/>
            <person name="Davis P."/>
            <person name="Doggett J."/>
            <person name="Feltwell T."/>
            <person name="Goble A."/>
            <person name="Hamlin N."/>
            <person name="Hauser H."/>
            <person name="Holroyd S."/>
            <person name="Jagels K."/>
            <person name="Leather S."/>
            <person name="Moule S."/>
            <person name="Norberczak H."/>
            <person name="O'Neil S."/>
            <person name="Ormond D."/>
            <person name="Price C."/>
            <person name="Rabbinowitsch E."/>
            <person name="Rutter S."/>
            <person name="Sanders M."/>
            <person name="Saunders D."/>
            <person name="Seeger K."/>
            <person name="Sharp S."/>
            <person name="Simmonds M."/>
            <person name="Skelton J."/>
            <person name="Squares R."/>
            <person name="Squares S."/>
            <person name="Stevens K."/>
            <person name="Unwin L."/>
            <person name="Whitehead S."/>
            <person name="Barrell B.G."/>
            <person name="Maskell D.J."/>
        </authorList>
    </citation>
    <scope>NUCLEOTIDE SEQUENCE [LARGE SCALE GENOMIC DNA]</scope>
    <source>
        <strain>12822 / ATCC BAA-587 / NCTC 13253</strain>
    </source>
</reference>
<gene>
    <name type="primary">clpB</name>
    <name type="ordered locus">BPP1814</name>
</gene>
<organism>
    <name type="scientific">Bordetella parapertussis (strain 12822 / ATCC BAA-587 / NCTC 13253)</name>
    <dbReference type="NCBI Taxonomy" id="257311"/>
    <lineage>
        <taxon>Bacteria</taxon>
        <taxon>Pseudomonadati</taxon>
        <taxon>Pseudomonadota</taxon>
        <taxon>Betaproteobacteria</taxon>
        <taxon>Burkholderiales</taxon>
        <taxon>Alcaligenaceae</taxon>
        <taxon>Bordetella</taxon>
    </lineage>
</organism>
<feature type="chain" id="PRO_0000191096" description="Chaperone protein ClpB">
    <location>
        <begin position="1"/>
        <end position="865"/>
    </location>
</feature>
<feature type="domain" description="Clp R" evidence="2">
    <location>
        <begin position="3"/>
        <end position="145"/>
    </location>
</feature>
<feature type="region of interest" description="Repeat 1" evidence="2">
    <location>
        <begin position="6"/>
        <end position="71"/>
    </location>
</feature>
<feature type="region of interest" description="Repeat 2" evidence="2">
    <location>
        <begin position="82"/>
        <end position="145"/>
    </location>
</feature>
<feature type="region of interest" description="NBD1" evidence="1">
    <location>
        <begin position="158"/>
        <end position="339"/>
    </location>
</feature>
<feature type="region of interest" description="Linker" evidence="1">
    <location>
        <begin position="340"/>
        <end position="551"/>
    </location>
</feature>
<feature type="region of interest" description="NBD2" evidence="1">
    <location>
        <begin position="561"/>
        <end position="770"/>
    </location>
</feature>
<feature type="region of interest" description="C-terminal" evidence="1">
    <location>
        <begin position="771"/>
        <end position="865"/>
    </location>
</feature>
<feature type="coiled-coil region" evidence="1">
    <location>
        <begin position="390"/>
        <end position="524"/>
    </location>
</feature>
<feature type="binding site" evidence="1">
    <location>
        <begin position="205"/>
        <end position="212"/>
    </location>
    <ligand>
        <name>ATP</name>
        <dbReference type="ChEBI" id="CHEBI:30616"/>
        <label>1</label>
    </ligand>
</feature>
<feature type="binding site" evidence="1">
    <location>
        <begin position="611"/>
        <end position="618"/>
    </location>
    <ligand>
        <name>ATP</name>
        <dbReference type="ChEBI" id="CHEBI:30616"/>
        <label>2</label>
    </ligand>
</feature>
<proteinExistence type="inferred from homology"/>
<keyword id="KW-0067">ATP-binding</keyword>
<keyword id="KW-0143">Chaperone</keyword>
<keyword id="KW-0175">Coiled coil</keyword>
<keyword id="KW-0963">Cytoplasm</keyword>
<keyword id="KW-0547">Nucleotide-binding</keyword>
<keyword id="KW-0677">Repeat</keyword>
<keyword id="KW-0346">Stress response</keyword>
<evidence type="ECO:0000250" key="1"/>
<evidence type="ECO:0000255" key="2">
    <source>
        <dbReference type="PROSITE-ProRule" id="PRU01251"/>
    </source>
</evidence>
<evidence type="ECO:0000305" key="3"/>
<sequence>MRFDKLTTKFQQALADAQSLAARNDHPYIEPVHVLAALLGDPDSGAASLLARAGVAVNRVQPAIDSALKGLPQVQGEDNVQVGRELQSVLVRTDKEAARRGDTYIASELFLLALADDKGDAGRILREAGLQKKALEAAIDAVRGGENVSGAEGESNREALSKYTLDLTERARQGKLDPVIGRDDEIRRTIQILQRRTKNNPVLIGEPGVGKTAIVEGLAQRIVNDEVPETLRGKRVLSLDLAALLAGAKFRGEFEERLKAVLKELAQDDGQNIVFIDELHTMVGAGKAEGAMDAGNMLKPALARGELHCIGATTLDEYRKYIEKDAALERRFQKVLVGEPDVESTIAILRGLQERYELHHGVEITDPAIVAAAELSHRYITDRFLPDKAIDLIDEAGARIRMEIDSKPEVMDRLDRRIIQLKIEREAVKKETDDASMRRLAVIEEELEKLQREYNDYEEIWKAEKAAVQGTQAIKEEIDRVRAEMAELQRKGQFDKLAELQYGKLPELEARLKAADSAEREAGESDSGKPRLLRTQVGAEEIAEVVSRATGIPVAKMMQGERDKLLRMEDFLHKRVVGQDEAVRLVSDAIRRSRAGLADPSRPYGSFLFLGPTGVGKTELTRALADFLFDSEEHMIRIDMSEFMEKHSVARLIGAPPGYVGYEEGGYLTEAVRRKPYSVILLDEVEKAHPDVFNVLLQVLDDGRLTDGQGRTVDFRNTVIVMTSNLGSQHIQSMAGKPYEVIKEVVWDELKHTFRPEFLNRIDEVVVFHGLEAQHIESIARIQLKRLGERLEKQEMRLDVSDAALAEIARSGFDPVFGARPLKRAVQQQIENPVAKLILEGVFGPRDVVPVDWQDGKFVFTRTLQ</sequence>
<dbReference type="EMBL" id="BX640428">
    <property type="protein sequence ID" value="CAE37116.1"/>
    <property type="molecule type" value="Genomic_DNA"/>
</dbReference>
<dbReference type="RefSeq" id="WP_010928216.1">
    <property type="nucleotide sequence ID" value="NC_002928.3"/>
</dbReference>
<dbReference type="SMR" id="Q7W9E6"/>
<dbReference type="GeneID" id="93203581"/>
<dbReference type="KEGG" id="bpa:BPP1814"/>
<dbReference type="HOGENOM" id="CLU_005070_4_0_4"/>
<dbReference type="Proteomes" id="UP000001421">
    <property type="component" value="Chromosome"/>
</dbReference>
<dbReference type="GO" id="GO:0005737">
    <property type="term" value="C:cytoplasm"/>
    <property type="evidence" value="ECO:0007669"/>
    <property type="project" value="UniProtKB-SubCell"/>
</dbReference>
<dbReference type="GO" id="GO:0005524">
    <property type="term" value="F:ATP binding"/>
    <property type="evidence" value="ECO:0007669"/>
    <property type="project" value="UniProtKB-KW"/>
</dbReference>
<dbReference type="GO" id="GO:0016887">
    <property type="term" value="F:ATP hydrolysis activity"/>
    <property type="evidence" value="ECO:0007669"/>
    <property type="project" value="InterPro"/>
</dbReference>
<dbReference type="GO" id="GO:0034605">
    <property type="term" value="P:cellular response to heat"/>
    <property type="evidence" value="ECO:0007669"/>
    <property type="project" value="TreeGrafter"/>
</dbReference>
<dbReference type="GO" id="GO:0042026">
    <property type="term" value="P:protein refolding"/>
    <property type="evidence" value="ECO:0007669"/>
    <property type="project" value="InterPro"/>
</dbReference>
<dbReference type="CDD" id="cd00009">
    <property type="entry name" value="AAA"/>
    <property type="match status" value="1"/>
</dbReference>
<dbReference type="CDD" id="cd19499">
    <property type="entry name" value="RecA-like_ClpB_Hsp104-like"/>
    <property type="match status" value="1"/>
</dbReference>
<dbReference type="FunFam" id="1.10.8.60:FF:000017">
    <property type="entry name" value="ATP-dependent chaperone ClpB"/>
    <property type="match status" value="1"/>
</dbReference>
<dbReference type="FunFam" id="3.40.50.300:FF:000120">
    <property type="entry name" value="ATP-dependent chaperone ClpB"/>
    <property type="match status" value="1"/>
</dbReference>
<dbReference type="FunFam" id="3.40.50.300:FF:000025">
    <property type="entry name" value="ATP-dependent Clp protease subunit"/>
    <property type="match status" value="1"/>
</dbReference>
<dbReference type="FunFam" id="3.40.50.300:FF:000010">
    <property type="entry name" value="Chaperone clpB 1, putative"/>
    <property type="match status" value="1"/>
</dbReference>
<dbReference type="Gene3D" id="1.10.8.60">
    <property type="match status" value="1"/>
</dbReference>
<dbReference type="Gene3D" id="1.10.1780.10">
    <property type="entry name" value="Clp, N-terminal domain"/>
    <property type="match status" value="1"/>
</dbReference>
<dbReference type="Gene3D" id="3.40.50.300">
    <property type="entry name" value="P-loop containing nucleotide triphosphate hydrolases"/>
    <property type="match status" value="3"/>
</dbReference>
<dbReference type="InterPro" id="IPR003593">
    <property type="entry name" value="AAA+_ATPase"/>
</dbReference>
<dbReference type="InterPro" id="IPR003959">
    <property type="entry name" value="ATPase_AAA_core"/>
</dbReference>
<dbReference type="InterPro" id="IPR017730">
    <property type="entry name" value="Chaperonin_ClpB"/>
</dbReference>
<dbReference type="InterPro" id="IPR019489">
    <property type="entry name" value="Clp_ATPase_C"/>
</dbReference>
<dbReference type="InterPro" id="IPR036628">
    <property type="entry name" value="Clp_N_dom_sf"/>
</dbReference>
<dbReference type="InterPro" id="IPR004176">
    <property type="entry name" value="Clp_R_dom"/>
</dbReference>
<dbReference type="InterPro" id="IPR001270">
    <property type="entry name" value="ClpA/B"/>
</dbReference>
<dbReference type="InterPro" id="IPR018368">
    <property type="entry name" value="ClpA/B_CS1"/>
</dbReference>
<dbReference type="InterPro" id="IPR028299">
    <property type="entry name" value="ClpA/B_CS2"/>
</dbReference>
<dbReference type="InterPro" id="IPR041546">
    <property type="entry name" value="ClpA/ClpB_AAA_lid"/>
</dbReference>
<dbReference type="InterPro" id="IPR050130">
    <property type="entry name" value="ClpA_ClpB"/>
</dbReference>
<dbReference type="InterPro" id="IPR027417">
    <property type="entry name" value="P-loop_NTPase"/>
</dbReference>
<dbReference type="NCBIfam" id="TIGR03346">
    <property type="entry name" value="chaperone_ClpB"/>
    <property type="match status" value="1"/>
</dbReference>
<dbReference type="PANTHER" id="PTHR11638">
    <property type="entry name" value="ATP-DEPENDENT CLP PROTEASE"/>
    <property type="match status" value="1"/>
</dbReference>
<dbReference type="PANTHER" id="PTHR11638:SF18">
    <property type="entry name" value="HEAT SHOCK PROTEIN 104"/>
    <property type="match status" value="1"/>
</dbReference>
<dbReference type="Pfam" id="PF00004">
    <property type="entry name" value="AAA"/>
    <property type="match status" value="1"/>
</dbReference>
<dbReference type="Pfam" id="PF07724">
    <property type="entry name" value="AAA_2"/>
    <property type="match status" value="1"/>
</dbReference>
<dbReference type="Pfam" id="PF17871">
    <property type="entry name" value="AAA_lid_9"/>
    <property type="match status" value="1"/>
</dbReference>
<dbReference type="Pfam" id="PF02861">
    <property type="entry name" value="Clp_N"/>
    <property type="match status" value="2"/>
</dbReference>
<dbReference type="Pfam" id="PF10431">
    <property type="entry name" value="ClpB_D2-small"/>
    <property type="match status" value="1"/>
</dbReference>
<dbReference type="PRINTS" id="PR00300">
    <property type="entry name" value="CLPPROTEASEA"/>
</dbReference>
<dbReference type="SMART" id="SM00382">
    <property type="entry name" value="AAA"/>
    <property type="match status" value="2"/>
</dbReference>
<dbReference type="SMART" id="SM01086">
    <property type="entry name" value="ClpB_D2-small"/>
    <property type="match status" value="1"/>
</dbReference>
<dbReference type="SUPFAM" id="SSF81923">
    <property type="entry name" value="Double Clp-N motif"/>
    <property type="match status" value="1"/>
</dbReference>
<dbReference type="SUPFAM" id="SSF52540">
    <property type="entry name" value="P-loop containing nucleoside triphosphate hydrolases"/>
    <property type="match status" value="2"/>
</dbReference>
<dbReference type="PROSITE" id="PS51903">
    <property type="entry name" value="CLP_R"/>
    <property type="match status" value="1"/>
</dbReference>
<dbReference type="PROSITE" id="PS00870">
    <property type="entry name" value="CLPAB_1"/>
    <property type="match status" value="1"/>
</dbReference>
<dbReference type="PROSITE" id="PS00871">
    <property type="entry name" value="CLPAB_2"/>
    <property type="match status" value="1"/>
</dbReference>
<accession>Q7W9E6</accession>
<comment type="function">
    <text evidence="1">Part of a stress-induced multi-chaperone system, it is involved in the recovery of the cell from heat-induced damage, in cooperation with DnaK, DnaJ and GrpE. Acts before DnaK, in the processing of protein aggregates. Protein binding stimulates the ATPase activity; ATP hydrolysis unfolds the denatured protein aggregates, which probably helps expose new hydrophobic binding sites on the surface of ClpB-bound aggregates, contributing to the solubilization and refolding of denatured protein aggregates by DnaK (By similarity).</text>
</comment>
<comment type="subunit">
    <text evidence="1">Homohexamer. The oligomerization is ATP-dependent (By similarity).</text>
</comment>
<comment type="subcellular location">
    <subcellularLocation>
        <location evidence="3">Cytoplasm</location>
    </subcellularLocation>
</comment>
<comment type="domain">
    <text evidence="1">The Clp repeat (R) domain probably functions as a substrate-discriminating domain, recruiting aggregated proteins to the ClpB hexamer and/or stabilizing bound proteins. The NBD2 domain is responsible for oligomerization, whereas the NBD1 domain stabilizes the hexamer probably in an ATP-dependent manner. The movement of the coiled-coil domain is essential for ClpB ability to rescue proteins from an aggregated state, probably by pulling apart large aggregated proteins, which are bound between the coiled-coils motifs of adjacent ClpB subunits in the functional hexamer (By similarity).</text>
</comment>
<comment type="similarity">
    <text evidence="3">Belongs to the ClpA/ClpB family.</text>
</comment>